<reference key="1">
    <citation type="journal article" date="1990" name="Nucleic Acids Res.">
        <title>cDNA sequence of rat prothrombin.</title>
        <authorList>
            <person name="Dihanich M."/>
            <person name="Monard D."/>
        </authorList>
    </citation>
    <scope>NUCLEOTIDE SEQUENCE</scope>
    <source>
        <strain>Sprague-Dawley</strain>
        <tissue>Liver</tissue>
    </source>
</reference>
<reference key="2">
    <citation type="journal article" date="1992" name="Proc. Natl. Acad. Sci. U.S.A.">
        <title>Partial characterization of vertebrate prothrombin cDNAs: amplification and sequence analysis of the B chain of thrombin from nine different species.</title>
        <authorList>
            <person name="Banfield D.K."/>
            <person name="Macgillivray R.T."/>
        </authorList>
    </citation>
    <scope>NUCLEOTIDE SEQUENCE [MRNA] OF 383-617</scope>
    <source>
        <tissue>Liver</tissue>
    </source>
</reference>
<reference key="3">
    <citation type="journal article" date="1992" name="J. Clin. Invest.">
        <title>Enhancement of incisional wound healing and neovascularization in normal rats by thrombin and synthetic thrombin receptor-activating peptides.</title>
        <authorList>
            <person name="Carney D.H."/>
            <person name="Mann R."/>
            <person name="Redin W.R."/>
            <person name="Pernia S.D."/>
            <person name="Berry D."/>
            <person name="Heggers J.P."/>
            <person name="Hayward P.G."/>
            <person name="Robson M.C."/>
            <person name="Christie J."/>
            <person name="Annable C."/>
            <person name="Fenton W.J. II"/>
            <person name="Glenn K.C."/>
        </authorList>
    </citation>
    <scope>CHARACTERIZATION OF THE TP508 PEPTIDE</scope>
</reference>
<reference key="4">
    <citation type="journal article" date="2005" name="J. Orthop. Res.">
        <title>Thrombin peptide (TP508) promotes fracture repair by up-regulating inflammatory mediators, early growth factors, and increasing angiogenesis.</title>
        <authorList>
            <person name="Wang H."/>
            <person name="Li X."/>
            <person name="Tomin E."/>
            <person name="Doty S.B."/>
            <person name="Lane J.M."/>
            <person name="Carney D.H."/>
            <person name="Ryaby J.T."/>
        </authorList>
    </citation>
    <scope>CHARACTERIZATION OF THE TP508 PEPTIDE</scope>
</reference>
<feature type="signal peptide" evidence="4">
    <location>
        <begin position="1"/>
        <end position="24"/>
    </location>
</feature>
<feature type="propeptide" id="PRO_0000028177">
    <location>
        <begin position="25"/>
        <end position="43"/>
    </location>
</feature>
<feature type="chain" id="PRO_0000028178" description="Prothrombin">
    <location>
        <begin position="44"/>
        <end position="617"/>
    </location>
</feature>
<feature type="peptide" id="PRO_0000028179" description="Activation peptide fragment 1">
    <location>
        <begin position="44"/>
        <end position="200"/>
    </location>
</feature>
<feature type="peptide" id="PRO_0000028180" description="Activation peptide fragment 2">
    <location>
        <begin position="201"/>
        <end position="323"/>
    </location>
</feature>
<feature type="chain" id="PRO_0000028181" description="Thrombin light chain">
    <location>
        <begin position="311"/>
        <end position="359"/>
    </location>
</feature>
<feature type="chain" id="PRO_0000028182" description="Thrombin heavy chain">
    <location>
        <begin position="360"/>
        <end position="617"/>
    </location>
</feature>
<feature type="domain" description="Gla" evidence="7">
    <location>
        <begin position="44"/>
        <end position="90"/>
    </location>
</feature>
<feature type="domain" description="Kringle 1" evidence="5">
    <location>
        <begin position="109"/>
        <end position="187"/>
    </location>
</feature>
<feature type="domain" description="Kringle 2" evidence="5">
    <location>
        <begin position="215"/>
        <end position="292"/>
    </location>
</feature>
<feature type="domain" description="Peptidase S1" evidence="6">
    <location>
        <begin position="360"/>
        <end position="614"/>
    </location>
</feature>
<feature type="region of interest" description="High affinity receptor-binding region which is also known as the TP508 peptide">
    <location>
        <begin position="547"/>
        <end position="569"/>
    </location>
</feature>
<feature type="active site" description="Charge relay system" evidence="1">
    <location>
        <position position="402"/>
    </location>
</feature>
<feature type="active site" description="Charge relay system" evidence="1">
    <location>
        <position position="458"/>
    </location>
</feature>
<feature type="active site" description="Charge relay system" evidence="1">
    <location>
        <position position="564"/>
    </location>
</feature>
<feature type="site" description="Cleavage; by thrombin">
    <location>
        <begin position="200"/>
        <end position="201"/>
    </location>
</feature>
<feature type="site" description="Cleavage; by factor Xa" evidence="2">
    <location>
        <begin position="310"/>
        <end position="311"/>
    </location>
</feature>
<feature type="site" description="Cleavage; by factor Xa" evidence="2">
    <location>
        <begin position="359"/>
        <end position="360"/>
    </location>
</feature>
<feature type="modified residue" description="4-carboxyglutamate" evidence="3 7">
    <location>
        <position position="50"/>
    </location>
</feature>
<feature type="modified residue" description="4-carboxyglutamate" evidence="3 7">
    <location>
        <position position="51"/>
    </location>
</feature>
<feature type="modified residue" description="4-carboxyglutamate" evidence="3 7">
    <location>
        <position position="58"/>
    </location>
</feature>
<feature type="modified residue" description="4-carboxyglutamate" evidence="3 7">
    <location>
        <position position="60"/>
    </location>
</feature>
<feature type="modified residue" description="4-carboxyglutamate" evidence="3 7">
    <location>
        <position position="63"/>
    </location>
</feature>
<feature type="modified residue" description="4-carboxyglutamate" evidence="3 7">
    <location>
        <position position="64"/>
    </location>
</feature>
<feature type="modified residue" description="4-carboxyglutamate" evidence="3 7">
    <location>
        <position position="69"/>
    </location>
</feature>
<feature type="modified residue" description="4-carboxyglutamate" evidence="3 7">
    <location>
        <position position="70"/>
    </location>
</feature>
<feature type="modified residue" description="4-carboxyglutamate" evidence="3 7">
    <location>
        <position position="73"/>
    </location>
</feature>
<feature type="modified residue" description="4-carboxyglutamate" evidence="3 7">
    <location>
        <position position="76"/>
    </location>
</feature>
<feature type="glycosylation site" description="N-linked (GlcNAc...) asparagine" evidence="4">
    <location>
        <position position="120"/>
    </location>
</feature>
<feature type="glycosylation site" description="N-linked (GlcNAc...) asparagine" evidence="4">
    <location>
        <position position="144"/>
    </location>
</feature>
<feature type="glycosylation site" description="N-linked (GlcNAc...) asparagine" evidence="4">
    <location>
        <position position="412"/>
    </location>
</feature>
<feature type="glycosylation site" description="N-linked (GlcNAc...) asparagine" evidence="4">
    <location>
        <position position="552"/>
    </location>
</feature>
<feature type="disulfide bond" evidence="1">
    <location>
        <begin position="61"/>
        <end position="66"/>
    </location>
</feature>
<feature type="disulfide bond" evidence="1">
    <location>
        <begin position="91"/>
        <end position="104"/>
    </location>
</feature>
<feature type="disulfide bond" evidence="1">
    <location>
        <begin position="109"/>
        <end position="187"/>
    </location>
</feature>
<feature type="disulfide bond" evidence="1">
    <location>
        <begin position="130"/>
        <end position="170"/>
    </location>
</feature>
<feature type="disulfide bond" evidence="1">
    <location>
        <begin position="158"/>
        <end position="182"/>
    </location>
</feature>
<feature type="disulfide bond" evidence="1">
    <location>
        <begin position="215"/>
        <end position="292"/>
    </location>
</feature>
<feature type="disulfide bond" evidence="1">
    <location>
        <begin position="236"/>
        <end position="276"/>
    </location>
</feature>
<feature type="disulfide bond" evidence="1">
    <location>
        <begin position="264"/>
        <end position="287"/>
    </location>
</feature>
<feature type="disulfide bond" description="Interchain (between light and heavy chains)" evidence="5 6 7">
    <location>
        <begin position="332"/>
        <end position="478"/>
    </location>
</feature>
<feature type="disulfide bond" evidence="1">
    <location>
        <begin position="387"/>
        <end position="403"/>
    </location>
</feature>
<feature type="disulfide bond" evidence="1">
    <location>
        <begin position="532"/>
        <end position="546"/>
    </location>
</feature>
<feature type="disulfide bond" evidence="1">
    <location>
        <begin position="560"/>
        <end position="590"/>
    </location>
</feature>
<proteinExistence type="evidence at protein level"/>
<keyword id="KW-0011">Acute phase</keyword>
<keyword id="KW-0094">Blood coagulation</keyword>
<keyword id="KW-0106">Calcium</keyword>
<keyword id="KW-0165">Cleavage on pair of basic residues</keyword>
<keyword id="KW-1015">Disulfide bond</keyword>
<keyword id="KW-0301">Gamma-carboxyglutamic acid</keyword>
<keyword id="KW-0325">Glycoprotein</keyword>
<keyword id="KW-0356">Hemostasis</keyword>
<keyword id="KW-0378">Hydrolase</keyword>
<keyword id="KW-0420">Kringle</keyword>
<keyword id="KW-0645">Protease</keyword>
<keyword id="KW-1185">Reference proteome</keyword>
<keyword id="KW-0677">Repeat</keyword>
<keyword id="KW-0720">Serine protease</keyword>
<keyword id="KW-0732">Signal</keyword>
<keyword id="KW-0865">Zymogen</keyword>
<evidence type="ECO:0000250" key="1"/>
<evidence type="ECO:0000250" key="2">
    <source>
        <dbReference type="UniProtKB" id="P00734"/>
    </source>
</evidence>
<evidence type="ECO:0000250" key="3">
    <source>
        <dbReference type="UniProtKB" id="P00735"/>
    </source>
</evidence>
<evidence type="ECO:0000255" key="4"/>
<evidence type="ECO:0000255" key="5">
    <source>
        <dbReference type="PROSITE-ProRule" id="PRU00121"/>
    </source>
</evidence>
<evidence type="ECO:0000255" key="6">
    <source>
        <dbReference type="PROSITE-ProRule" id="PRU00274"/>
    </source>
</evidence>
<evidence type="ECO:0000255" key="7">
    <source>
        <dbReference type="PROSITE-ProRule" id="PRU00463"/>
    </source>
</evidence>
<sequence length="617" mass="70412">MLHVRGLGLPGCLALAALASLVHSQHVFLAPQQALSLLQRVRRANSGFLEELRKGNLERECVEEQCSYEEAFEALESPQDTDVFWAKYTVCDSVRKPRETFMDCLEGRCAMDLGLNYHGNVSVTHTGIECQLWRSRYPHRPDINSTTHPGADLKENFCRNPDSSTSGPWCYTTDPTVRREECSIPVCGQEGRTTVKMTPRSRGSKENLSPPLGECLLERGRLYQGNLAVTTLGSPCLAWDSLPTKTLSKYQNFDPEVKLVQNFCRNPDRDEEGAWCFVAQQPGFEYCSLNYCDEAVGEENHDGDESIAGRTTDAEFHTFFDERTFGLGEADCGLRPLFEKKSLTDKTEKELLDSYIDGRIVEGWDAEKGIAPWQVMLFRKSPQELLCGASLISDRWVLTAAHCILYPPWDKNFTENDLLVRIGKHSRTRYERNVEKISMLEKIYIHPRYNWRENLDRDIALLKLKKPVPFSDYIHPVCLPDKQTVTSLLQAGYKGRVTGWGNLRETWTTNINEIQPSVLQVVNLPIVERPVCKASTRIRITDNMFCAGFKVNDTKRGDACEGDSGGPFVMKSPYNHRWYQMGIVSWGEGCDRNGKYGFYTHVFRLKRWMQKVIDQHR</sequence>
<name>THRB_RAT</name>
<gene>
    <name type="primary">F2</name>
</gene>
<accession>P18292</accession>
<organism>
    <name type="scientific">Rattus norvegicus</name>
    <name type="common">Rat</name>
    <dbReference type="NCBI Taxonomy" id="10116"/>
    <lineage>
        <taxon>Eukaryota</taxon>
        <taxon>Metazoa</taxon>
        <taxon>Chordata</taxon>
        <taxon>Craniata</taxon>
        <taxon>Vertebrata</taxon>
        <taxon>Euteleostomi</taxon>
        <taxon>Mammalia</taxon>
        <taxon>Eutheria</taxon>
        <taxon>Euarchontoglires</taxon>
        <taxon>Glires</taxon>
        <taxon>Rodentia</taxon>
        <taxon>Myomorpha</taxon>
        <taxon>Muroidea</taxon>
        <taxon>Muridae</taxon>
        <taxon>Murinae</taxon>
        <taxon>Rattus</taxon>
    </lineage>
</organism>
<protein>
    <recommendedName>
        <fullName>Prothrombin</fullName>
        <ecNumber>3.4.21.5</ecNumber>
    </recommendedName>
    <alternativeName>
        <fullName>Coagulation factor II</fullName>
    </alternativeName>
    <component>
        <recommendedName>
            <fullName>Activation peptide fragment 1</fullName>
        </recommendedName>
    </component>
    <component>
        <recommendedName>
            <fullName>Activation peptide fragment 2</fullName>
        </recommendedName>
    </component>
    <component>
        <recommendedName>
            <fullName>Thrombin light chain</fullName>
        </recommendedName>
    </component>
    <component>
        <recommendedName>
            <fullName>Thrombin heavy chain</fullName>
        </recommendedName>
    </component>
</protein>
<comment type="function">
    <text evidence="2">Thrombin, which cleaves bonds after Arg and Lys, converts fibrinogen to fibrin and activates factors V, VII, VIII, XIII, and, in complex with thrombomodulin, protein C. Functions in blood homeostasis, inflammation and wound healing. Activates coagulation factor XI (F11); activation is promoted by the contact with negatively charged surfaces (By similarity). Triggers the production of pro-inflammatory cytokines, such as MCP-1/CCL2 and IL8/CXCL8, in endothelial cells (By similarity).</text>
</comment>
<comment type="catalytic activity">
    <reaction>
        <text>Selective cleavage of Arg-|-Gly bonds in fibrinogen to form fibrin and release fibrinopeptides A and B.</text>
        <dbReference type="EC" id="3.4.21.5"/>
    </reaction>
</comment>
<comment type="activity regulation">
    <text evidence="2">Activity is promoted in the presence of negatively charged surfaces, such as polyphosphate and dextran sulfate (By similarity). Inhibited by SERPINA5 (By similarity).</text>
</comment>
<comment type="subunit">
    <text evidence="2">Heterodimer (named alpha-thrombin) of a light and a heavy chain; disulfide-linked. Forms a heterodimer with SERPINA5. In plasma, interacts (via N-terminus) with alpha-1-microglobulin; this interaction does not prevent the activation of prothrombin to thrombin.</text>
</comment>
<comment type="PTM">
    <text evidence="1">The gamma-carboxyglutamyl residues, which bind calcium ions, result from the carboxylation of glutamyl residues by a microsomal enzyme, the vitamin K-dependent carboxylase. The modified residues are necessary for the calcium-dependent interaction with a negatively charged phospholipid surface, which is essential for the conversion of prothrombin to thrombin (By similarity).</text>
</comment>
<comment type="PTM">
    <text evidence="2">In the penultimate step of the coagulation cascade, prothrombin is converted to thrombin by the prothrombinase complex composed of factor Xa (F10), cofactor Va (F5), and phospholipids. This activation requires factor Xa-catalyzed sequential cleavage at 2 sites, Arg-310 and Arg-359, along 2 possible pathways. In the first pathway, the first cleavage occurs at Arg-310, leading to the formation of the inactive intermediate prethrombin-2. This pathway preferentially occurs on platelets and in the absence of cofactor Va. In the second pathway, the first cleavage occurs at Arg-359, which separates protease domain into 2 chains that remain connected through a disulfide bond and generates the active intermediate meizothrombin. The presence of cofactor Va directs activation along the meizothrombin pathway and greatly accelerates the rate of cleavage at Arg-359, but has a smaller effect on the cleavage of meizothrombin at Arg-310. Meizothrombin accumulates as an intermediate when prothrombinase is assembled on the membrane of red blood cells.</text>
</comment>
<comment type="miscellaneous">
    <text>Thrombin can itself cleave the N-terminal fragment (fragment 1) of the prothrombin, prior to its activation by factor Xa.</text>
</comment>
<comment type="miscellaneous">
    <text>The peptide TP508 is able to accelerate repair of both soft and hard tissues.</text>
</comment>
<comment type="similarity">
    <text evidence="6">Belongs to the peptidase S1 family.</text>
</comment>
<dbReference type="EC" id="3.4.21.5"/>
<dbReference type="EMBL" id="X52835">
    <property type="protein sequence ID" value="CAA37017.1"/>
    <property type="molecule type" value="Transcribed_RNA"/>
</dbReference>
<dbReference type="EMBL" id="M81397">
    <property type="protein sequence ID" value="AAA42240.1"/>
    <property type="molecule type" value="mRNA"/>
</dbReference>
<dbReference type="PIR" id="S10511">
    <property type="entry name" value="S10511"/>
</dbReference>
<dbReference type="SMR" id="P18292"/>
<dbReference type="FunCoup" id="P18292">
    <property type="interactions" value="141"/>
</dbReference>
<dbReference type="STRING" id="10116.ENSRNOP00000022233"/>
<dbReference type="BindingDB" id="P18292"/>
<dbReference type="ChEMBL" id="CHEMBL3078"/>
<dbReference type="MEROPS" id="S01.217"/>
<dbReference type="GlyCosmos" id="P18292">
    <property type="glycosylation" value="4 sites, No reported glycans"/>
</dbReference>
<dbReference type="GlyGen" id="P18292">
    <property type="glycosylation" value="4 sites"/>
</dbReference>
<dbReference type="iPTMnet" id="P18292"/>
<dbReference type="PhosphoSitePlus" id="P18292"/>
<dbReference type="jPOST" id="P18292"/>
<dbReference type="PaxDb" id="10116-ENSRNOP00000022233"/>
<dbReference type="UCSC" id="RGD:61996">
    <property type="organism name" value="rat"/>
</dbReference>
<dbReference type="AGR" id="RGD:61996"/>
<dbReference type="RGD" id="61996">
    <property type="gene designation" value="F2"/>
</dbReference>
<dbReference type="eggNOG" id="ENOG502QTSX">
    <property type="taxonomic scope" value="Eukaryota"/>
</dbReference>
<dbReference type="InParanoid" id="P18292"/>
<dbReference type="OrthoDB" id="6380398at2759"/>
<dbReference type="PhylomeDB" id="P18292"/>
<dbReference type="Reactome" id="R-RNO-140837">
    <property type="pathway name" value="Intrinsic Pathway of Fibrin Clot Formation"/>
</dbReference>
<dbReference type="Reactome" id="R-RNO-140875">
    <property type="pathway name" value="Common Pathway of Fibrin Clot Formation"/>
</dbReference>
<dbReference type="Reactome" id="R-RNO-159740">
    <property type="pathway name" value="Gamma-carboxylation of protein precursors"/>
</dbReference>
<dbReference type="Reactome" id="R-RNO-159763">
    <property type="pathway name" value="Transport of gamma-carboxylated protein precursors from the endoplasmic reticulum to the Golgi apparatus"/>
</dbReference>
<dbReference type="Reactome" id="R-RNO-159782">
    <property type="pathway name" value="Removal of aminoterminal propeptides from gamma-carboxylated proteins"/>
</dbReference>
<dbReference type="Reactome" id="R-RNO-202733">
    <property type="pathway name" value="Cell surface interactions at the vascular wall"/>
</dbReference>
<dbReference type="Reactome" id="R-RNO-375276">
    <property type="pathway name" value="Peptide ligand-binding receptors"/>
</dbReference>
<dbReference type="Reactome" id="R-RNO-381426">
    <property type="pathway name" value="Regulation of Insulin-like Growth Factor (IGF) transport and uptake by Insulin-like Growth Factor Binding Proteins (IGFBPs)"/>
</dbReference>
<dbReference type="Reactome" id="R-RNO-416476">
    <property type="pathway name" value="G alpha (q) signalling events"/>
</dbReference>
<dbReference type="Reactome" id="R-RNO-456926">
    <property type="pathway name" value="Thrombin signalling through proteinase activated receptors (PARs)"/>
</dbReference>
<dbReference type="Reactome" id="R-RNO-76009">
    <property type="pathway name" value="Platelet Aggregation (Plug Formation)"/>
</dbReference>
<dbReference type="Reactome" id="R-RNO-977606">
    <property type="pathway name" value="Regulation of Complement cascade"/>
</dbReference>
<dbReference type="PRO" id="PR:P18292"/>
<dbReference type="Proteomes" id="UP000002494">
    <property type="component" value="Unplaced"/>
</dbReference>
<dbReference type="GO" id="GO:0062023">
    <property type="term" value="C:collagen-containing extracellular matrix"/>
    <property type="evidence" value="ECO:0000318"/>
    <property type="project" value="GO_Central"/>
</dbReference>
<dbReference type="GO" id="GO:0009897">
    <property type="term" value="C:external side of plasma membrane"/>
    <property type="evidence" value="ECO:0000266"/>
    <property type="project" value="RGD"/>
</dbReference>
<dbReference type="GO" id="GO:0005615">
    <property type="term" value="C:extracellular space"/>
    <property type="evidence" value="ECO:0000314"/>
    <property type="project" value="RGD"/>
</dbReference>
<dbReference type="GO" id="GO:0005509">
    <property type="term" value="F:calcium ion binding"/>
    <property type="evidence" value="ECO:0007669"/>
    <property type="project" value="InterPro"/>
</dbReference>
<dbReference type="GO" id="GO:0004175">
    <property type="term" value="F:endopeptidase activity"/>
    <property type="evidence" value="ECO:0000266"/>
    <property type="project" value="RGD"/>
</dbReference>
<dbReference type="GO" id="GO:0008201">
    <property type="term" value="F:heparin binding"/>
    <property type="evidence" value="ECO:0000266"/>
    <property type="project" value="RGD"/>
</dbReference>
<dbReference type="GO" id="GO:0001530">
    <property type="term" value="F:lipopolysaccharide binding"/>
    <property type="evidence" value="ECO:0000266"/>
    <property type="project" value="RGD"/>
</dbReference>
<dbReference type="GO" id="GO:0008233">
    <property type="term" value="F:peptidase activity"/>
    <property type="evidence" value="ECO:0000266"/>
    <property type="project" value="RGD"/>
</dbReference>
<dbReference type="GO" id="GO:0048018">
    <property type="term" value="F:receptor ligand activity"/>
    <property type="evidence" value="ECO:0000266"/>
    <property type="project" value="RGD"/>
</dbReference>
<dbReference type="GO" id="GO:0004252">
    <property type="term" value="F:serine-type endopeptidase activity"/>
    <property type="evidence" value="ECO:0000266"/>
    <property type="project" value="RGD"/>
</dbReference>
<dbReference type="GO" id="GO:0005102">
    <property type="term" value="F:signaling receptor binding"/>
    <property type="evidence" value="ECO:0000266"/>
    <property type="project" value="RGD"/>
</dbReference>
<dbReference type="GO" id="GO:0070053">
    <property type="term" value="F:thrombospondin receptor activity"/>
    <property type="evidence" value="ECO:0000266"/>
    <property type="project" value="RGD"/>
</dbReference>
<dbReference type="GO" id="GO:0006953">
    <property type="term" value="P:acute-phase response"/>
    <property type="evidence" value="ECO:0007669"/>
    <property type="project" value="UniProtKB-KW"/>
</dbReference>
<dbReference type="GO" id="GO:0061844">
    <property type="term" value="P:antimicrobial humoral immune response mediated by antimicrobial peptide"/>
    <property type="evidence" value="ECO:0000266"/>
    <property type="project" value="RGD"/>
</dbReference>
<dbReference type="GO" id="GO:0007166">
    <property type="term" value="P:cell surface receptor signaling pathway"/>
    <property type="evidence" value="ECO:0000266"/>
    <property type="project" value="RGD"/>
</dbReference>
<dbReference type="GO" id="GO:0071260">
    <property type="term" value="P:cellular response to mechanical stimulus"/>
    <property type="evidence" value="ECO:0000270"/>
    <property type="project" value="RGD"/>
</dbReference>
<dbReference type="GO" id="GO:0042730">
    <property type="term" value="P:fibrinolysis"/>
    <property type="evidence" value="ECO:0000266"/>
    <property type="project" value="RGD"/>
</dbReference>
<dbReference type="GO" id="GO:0007186">
    <property type="term" value="P:G protein-coupled receptor signaling pathway"/>
    <property type="evidence" value="ECO:0000266"/>
    <property type="project" value="RGD"/>
</dbReference>
<dbReference type="GO" id="GO:1990806">
    <property type="term" value="P:ligand-gated ion channel signaling pathway"/>
    <property type="evidence" value="ECO:0000266"/>
    <property type="project" value="RGD"/>
</dbReference>
<dbReference type="GO" id="GO:0048712">
    <property type="term" value="P:negative regulation of astrocyte differentiation"/>
    <property type="evidence" value="ECO:0000266"/>
    <property type="project" value="RGD"/>
</dbReference>
<dbReference type="GO" id="GO:0030195">
    <property type="term" value="P:negative regulation of blood coagulation"/>
    <property type="evidence" value="ECO:0000266"/>
    <property type="project" value="RGD"/>
</dbReference>
<dbReference type="GO" id="GO:1900016">
    <property type="term" value="P:negative regulation of cytokine production involved in inflammatory response"/>
    <property type="evidence" value="ECO:0000266"/>
    <property type="project" value="RGD"/>
</dbReference>
<dbReference type="GO" id="GO:0045861">
    <property type="term" value="P:negative regulation of proteolysis"/>
    <property type="evidence" value="ECO:0000266"/>
    <property type="project" value="RGD"/>
</dbReference>
<dbReference type="GO" id="GO:0030168">
    <property type="term" value="P:platelet activation"/>
    <property type="evidence" value="ECO:0000266"/>
    <property type="project" value="RGD"/>
</dbReference>
<dbReference type="GO" id="GO:0030194">
    <property type="term" value="P:positive regulation of blood coagulation"/>
    <property type="evidence" value="ECO:0000315"/>
    <property type="project" value="RGD"/>
</dbReference>
<dbReference type="GO" id="GO:0030307">
    <property type="term" value="P:positive regulation of cell growth"/>
    <property type="evidence" value="ECO:0000266"/>
    <property type="project" value="RGD"/>
</dbReference>
<dbReference type="GO" id="GO:0008284">
    <property type="term" value="P:positive regulation of cell population proliferation"/>
    <property type="evidence" value="ECO:0000266"/>
    <property type="project" value="RGD"/>
</dbReference>
<dbReference type="GO" id="GO:0032967">
    <property type="term" value="P:positive regulation of collagen biosynthetic process"/>
    <property type="evidence" value="ECO:0000266"/>
    <property type="project" value="RGD"/>
</dbReference>
<dbReference type="GO" id="GO:0032024">
    <property type="term" value="P:positive regulation of insulin secretion"/>
    <property type="evidence" value="ECO:0000266"/>
    <property type="project" value="RGD"/>
</dbReference>
<dbReference type="GO" id="GO:0051897">
    <property type="term" value="P:positive regulation of phosphatidylinositol 3-kinase/protein kinase B signal transduction"/>
    <property type="evidence" value="ECO:0000266"/>
    <property type="project" value="RGD"/>
</dbReference>
<dbReference type="GO" id="GO:1900738">
    <property type="term" value="P:positive regulation of phospholipase C-activating G protein-coupled receptor signaling pathway"/>
    <property type="evidence" value="ECO:0000266"/>
    <property type="project" value="RGD"/>
</dbReference>
<dbReference type="GO" id="GO:1900182">
    <property type="term" value="P:positive regulation of protein localization to nucleus"/>
    <property type="evidence" value="ECO:0000266"/>
    <property type="project" value="RGD"/>
</dbReference>
<dbReference type="GO" id="GO:2000379">
    <property type="term" value="P:positive regulation of reactive oxygen species metabolic process"/>
    <property type="evidence" value="ECO:0000266"/>
    <property type="project" value="RGD"/>
</dbReference>
<dbReference type="GO" id="GO:0051281">
    <property type="term" value="P:positive regulation of release of sequestered calcium ion into cytosol"/>
    <property type="evidence" value="ECO:0000266"/>
    <property type="project" value="RGD"/>
</dbReference>
<dbReference type="GO" id="GO:0006508">
    <property type="term" value="P:proteolysis"/>
    <property type="evidence" value="ECO:0007669"/>
    <property type="project" value="UniProtKB-KW"/>
</dbReference>
<dbReference type="GO" id="GO:0008360">
    <property type="term" value="P:regulation of cell shape"/>
    <property type="evidence" value="ECO:0000266"/>
    <property type="project" value="RGD"/>
</dbReference>
<dbReference type="GO" id="GO:0051480">
    <property type="term" value="P:regulation of cytosolic calcium ion concentration"/>
    <property type="evidence" value="ECO:0000266"/>
    <property type="project" value="RGD"/>
</dbReference>
<dbReference type="GO" id="GO:0010468">
    <property type="term" value="P:regulation of gene expression"/>
    <property type="evidence" value="ECO:0000266"/>
    <property type="project" value="RGD"/>
</dbReference>
<dbReference type="GO" id="GO:0014854">
    <property type="term" value="P:response to inactivity"/>
    <property type="evidence" value="ECO:0000270"/>
    <property type="project" value="RGD"/>
</dbReference>
<dbReference type="GO" id="GO:1904016">
    <property type="term" value="P:response to Thyroglobulin triiodothyronine"/>
    <property type="evidence" value="ECO:0000270"/>
    <property type="project" value="RGD"/>
</dbReference>
<dbReference type="GO" id="GO:1905225">
    <property type="term" value="P:response to thyrotropin-releasing hormone"/>
    <property type="evidence" value="ECO:0000270"/>
    <property type="project" value="RGD"/>
</dbReference>
<dbReference type="GO" id="GO:0097068">
    <property type="term" value="P:response to thyroxine"/>
    <property type="evidence" value="ECO:0000270"/>
    <property type="project" value="RGD"/>
</dbReference>
<dbReference type="GO" id="GO:0009611">
    <property type="term" value="P:response to wounding"/>
    <property type="evidence" value="ECO:0000266"/>
    <property type="project" value="RGD"/>
</dbReference>
<dbReference type="GO" id="GO:0070493">
    <property type="term" value="P:thrombin-activated receptor signaling pathway"/>
    <property type="evidence" value="ECO:0000266"/>
    <property type="project" value="RGD"/>
</dbReference>
<dbReference type="CDD" id="cd00108">
    <property type="entry name" value="KR"/>
    <property type="match status" value="2"/>
</dbReference>
<dbReference type="CDD" id="cd00190">
    <property type="entry name" value="Tryp_SPc"/>
    <property type="match status" value="1"/>
</dbReference>
<dbReference type="FunFam" id="2.40.10.10:FF:000085">
    <property type="entry name" value="Prothrombin"/>
    <property type="match status" value="1"/>
</dbReference>
<dbReference type="FunFam" id="2.40.20.10:FF:000015">
    <property type="entry name" value="Prothrombin"/>
    <property type="match status" value="1"/>
</dbReference>
<dbReference type="FunFam" id="2.40.20.10:FF:000017">
    <property type="entry name" value="Prothrombin"/>
    <property type="match status" value="1"/>
</dbReference>
<dbReference type="FunFam" id="4.10.140.10:FF:000001">
    <property type="entry name" value="Prothrombin"/>
    <property type="match status" value="1"/>
</dbReference>
<dbReference type="FunFam" id="2.40.10.10:FF:000004">
    <property type="entry name" value="Tryptase gamma 1"/>
    <property type="match status" value="1"/>
</dbReference>
<dbReference type="FunFam" id="4.10.740.10:FF:000001">
    <property type="entry name" value="vitamin K-dependent protein S"/>
    <property type="match status" value="1"/>
</dbReference>
<dbReference type="Gene3D" id="2.40.20.10">
    <property type="entry name" value="Plasminogen Kringle 4"/>
    <property type="match status" value="2"/>
</dbReference>
<dbReference type="Gene3D" id="4.10.140.10">
    <property type="entry name" value="Thrombin light chain domain"/>
    <property type="match status" value="1"/>
</dbReference>
<dbReference type="Gene3D" id="2.40.10.10">
    <property type="entry name" value="Trypsin-like serine proteases"/>
    <property type="match status" value="2"/>
</dbReference>
<dbReference type="InterPro" id="IPR035972">
    <property type="entry name" value="GLA-like_dom_SF"/>
</dbReference>
<dbReference type="InterPro" id="IPR000294">
    <property type="entry name" value="GLA_domain"/>
</dbReference>
<dbReference type="InterPro" id="IPR000001">
    <property type="entry name" value="Kringle"/>
</dbReference>
<dbReference type="InterPro" id="IPR013806">
    <property type="entry name" value="Kringle-like"/>
</dbReference>
<dbReference type="InterPro" id="IPR018056">
    <property type="entry name" value="Kringle_CS"/>
</dbReference>
<dbReference type="InterPro" id="IPR038178">
    <property type="entry name" value="Kringle_sf"/>
</dbReference>
<dbReference type="InterPro" id="IPR009003">
    <property type="entry name" value="Peptidase_S1_PA"/>
</dbReference>
<dbReference type="InterPro" id="IPR043504">
    <property type="entry name" value="Peptidase_S1_PA_chymotrypsin"/>
</dbReference>
<dbReference type="InterPro" id="IPR001314">
    <property type="entry name" value="Peptidase_S1A"/>
</dbReference>
<dbReference type="InterPro" id="IPR003966">
    <property type="entry name" value="Prothrombin/thrombin"/>
</dbReference>
<dbReference type="InterPro" id="IPR051659">
    <property type="entry name" value="Serine_Protease_S1-Domain"/>
</dbReference>
<dbReference type="InterPro" id="IPR018992">
    <property type="entry name" value="Thrombin_light_chain"/>
</dbReference>
<dbReference type="InterPro" id="IPR037111">
    <property type="entry name" value="Thrombin_light_chain_sf"/>
</dbReference>
<dbReference type="InterPro" id="IPR001254">
    <property type="entry name" value="Trypsin_dom"/>
</dbReference>
<dbReference type="InterPro" id="IPR018114">
    <property type="entry name" value="TRYPSIN_HIS"/>
</dbReference>
<dbReference type="InterPro" id="IPR033116">
    <property type="entry name" value="TRYPSIN_SER"/>
</dbReference>
<dbReference type="PANTHER" id="PTHR24254">
    <property type="entry name" value="PROTHROMBIN"/>
    <property type="match status" value="1"/>
</dbReference>
<dbReference type="PANTHER" id="PTHR24254:SF10">
    <property type="entry name" value="PROTHROMBIN"/>
    <property type="match status" value="1"/>
</dbReference>
<dbReference type="Pfam" id="PF00594">
    <property type="entry name" value="Gla"/>
    <property type="match status" value="1"/>
</dbReference>
<dbReference type="Pfam" id="PF00051">
    <property type="entry name" value="Kringle"/>
    <property type="match status" value="2"/>
</dbReference>
<dbReference type="Pfam" id="PF09396">
    <property type="entry name" value="Thrombin_light"/>
    <property type="match status" value="1"/>
</dbReference>
<dbReference type="Pfam" id="PF00089">
    <property type="entry name" value="Trypsin"/>
    <property type="match status" value="1"/>
</dbReference>
<dbReference type="PIRSF" id="PIRSF001149">
    <property type="entry name" value="Thrombin"/>
    <property type="match status" value="1"/>
</dbReference>
<dbReference type="PRINTS" id="PR00722">
    <property type="entry name" value="CHYMOTRYPSIN"/>
</dbReference>
<dbReference type="PRINTS" id="PR00001">
    <property type="entry name" value="GLABLOOD"/>
</dbReference>
<dbReference type="PRINTS" id="PR00018">
    <property type="entry name" value="KRINGLE"/>
</dbReference>
<dbReference type="PRINTS" id="PR01505">
    <property type="entry name" value="PROTHROMBIN"/>
</dbReference>
<dbReference type="SMART" id="SM00069">
    <property type="entry name" value="GLA"/>
    <property type="match status" value="1"/>
</dbReference>
<dbReference type="SMART" id="SM00130">
    <property type="entry name" value="KR"/>
    <property type="match status" value="2"/>
</dbReference>
<dbReference type="SMART" id="SM00020">
    <property type="entry name" value="Tryp_SPc"/>
    <property type="match status" value="1"/>
</dbReference>
<dbReference type="SUPFAM" id="SSF57630">
    <property type="entry name" value="GLA-domain"/>
    <property type="match status" value="1"/>
</dbReference>
<dbReference type="SUPFAM" id="SSF57440">
    <property type="entry name" value="Kringle-like"/>
    <property type="match status" value="2"/>
</dbReference>
<dbReference type="SUPFAM" id="SSF50494">
    <property type="entry name" value="Trypsin-like serine proteases"/>
    <property type="match status" value="1"/>
</dbReference>
<dbReference type="PROSITE" id="PS00011">
    <property type="entry name" value="GLA_1"/>
    <property type="match status" value="1"/>
</dbReference>
<dbReference type="PROSITE" id="PS50998">
    <property type="entry name" value="GLA_2"/>
    <property type="match status" value="1"/>
</dbReference>
<dbReference type="PROSITE" id="PS00021">
    <property type="entry name" value="KRINGLE_1"/>
    <property type="match status" value="2"/>
</dbReference>
<dbReference type="PROSITE" id="PS50070">
    <property type="entry name" value="KRINGLE_2"/>
    <property type="match status" value="2"/>
</dbReference>
<dbReference type="PROSITE" id="PS50240">
    <property type="entry name" value="TRYPSIN_DOM"/>
    <property type="match status" value="1"/>
</dbReference>
<dbReference type="PROSITE" id="PS00134">
    <property type="entry name" value="TRYPSIN_HIS"/>
    <property type="match status" value="1"/>
</dbReference>
<dbReference type="PROSITE" id="PS00135">
    <property type="entry name" value="TRYPSIN_SER"/>
    <property type="match status" value="1"/>
</dbReference>